<name>FBL58_ARATH</name>
<accession>Q9LXR0</accession>
<sequence>MDRISNLPNEIICHIVSFLSAKEAAFASVLSKRWQNLFTIVQKLEFDDSVKNQGSLMDFVNGVLALPVTTRISKFSLRFDSFLKRKLETGLVIGPHVVNRCLCNVLKRGVLDLKLEIYGEDGYLLPSEVFTCKTIVDLKLTSCIFAESYVIDVIPENAFLPGLESLFLKSIWFSDLRGCAFQTLLSACPVLKTLTIYDVQWEKWKWSRTVSSATLERLIIQRTEFTYFNGSDFKSITFDTPSLTYLKYIDFVPEEYPVVNLDSIVEAKLHLILTGNQDYPVRYLGREDDPITSNPTNLIKGLRNVEILHLSTATAQMLCFFPRETLPEFVNLHHLTIGPTYYECFNWRLLPILLKKTPNLKTLMIKGPLHLYYRDFNDDEEEEEPEYYCECSSGCNCLLSCHMEVLEISHYRGTTKELEKLKHFLGKLSCLEHVKLGVWASSDKEKLSITTDLLMLPRASVNCKIQINFS</sequence>
<keyword id="KW-0433">Leucine-rich repeat</keyword>
<keyword id="KW-1185">Reference proteome</keyword>
<keyword id="KW-0677">Repeat</keyword>
<organism>
    <name type="scientific">Arabidopsis thaliana</name>
    <name type="common">Mouse-ear cress</name>
    <dbReference type="NCBI Taxonomy" id="3702"/>
    <lineage>
        <taxon>Eukaryota</taxon>
        <taxon>Viridiplantae</taxon>
        <taxon>Streptophyta</taxon>
        <taxon>Embryophyta</taxon>
        <taxon>Tracheophyta</taxon>
        <taxon>Spermatophyta</taxon>
        <taxon>Magnoliopsida</taxon>
        <taxon>eudicotyledons</taxon>
        <taxon>Gunneridae</taxon>
        <taxon>Pentapetalae</taxon>
        <taxon>rosids</taxon>
        <taxon>malvids</taxon>
        <taxon>Brassicales</taxon>
        <taxon>Brassicaceae</taxon>
        <taxon>Camelineae</taxon>
        <taxon>Arabidopsis</taxon>
    </lineage>
</organism>
<proteinExistence type="predicted"/>
<protein>
    <recommendedName>
        <fullName>Putative F-box/LRR-repeat protein At3g58920</fullName>
    </recommendedName>
</protein>
<dbReference type="EMBL" id="AL353032">
    <property type="protein sequence ID" value="CAB88309.1"/>
    <property type="molecule type" value="Genomic_DNA"/>
</dbReference>
<dbReference type="EMBL" id="CP002686">
    <property type="protein sequence ID" value="AEE79850.1"/>
    <property type="molecule type" value="Genomic_DNA"/>
</dbReference>
<dbReference type="PIR" id="T49175">
    <property type="entry name" value="T49175"/>
</dbReference>
<dbReference type="RefSeq" id="NP_191451.1">
    <property type="nucleotide sequence ID" value="NM_115754.1"/>
</dbReference>
<dbReference type="FunCoup" id="Q9LXR0">
    <property type="interactions" value="6"/>
</dbReference>
<dbReference type="iPTMnet" id="Q9LXR0"/>
<dbReference type="PaxDb" id="3702-AT3G58920.1"/>
<dbReference type="ProteomicsDB" id="230073"/>
<dbReference type="EnsemblPlants" id="AT3G58920.1">
    <property type="protein sequence ID" value="AT3G58920.1"/>
    <property type="gene ID" value="AT3G58920"/>
</dbReference>
<dbReference type="GeneID" id="825061"/>
<dbReference type="Gramene" id="AT3G58920.1">
    <property type="protein sequence ID" value="AT3G58920.1"/>
    <property type="gene ID" value="AT3G58920"/>
</dbReference>
<dbReference type="KEGG" id="ath:AT3G58920"/>
<dbReference type="Araport" id="AT3G58920"/>
<dbReference type="TAIR" id="AT3G58920"/>
<dbReference type="HOGENOM" id="CLU_010721_7_4_1"/>
<dbReference type="InParanoid" id="Q9LXR0"/>
<dbReference type="OMA" id="VEAYINC"/>
<dbReference type="PhylomeDB" id="Q9LXR0"/>
<dbReference type="PRO" id="PR:Q9LXR0"/>
<dbReference type="Proteomes" id="UP000006548">
    <property type="component" value="Chromosome 3"/>
</dbReference>
<dbReference type="ExpressionAtlas" id="Q9LXR0">
    <property type="expression patterns" value="baseline and differential"/>
</dbReference>
<dbReference type="CDD" id="cd22160">
    <property type="entry name" value="F-box_AtFBL13-like"/>
    <property type="match status" value="1"/>
</dbReference>
<dbReference type="Gene3D" id="1.20.1280.50">
    <property type="match status" value="1"/>
</dbReference>
<dbReference type="Gene3D" id="3.80.10.10">
    <property type="entry name" value="Ribonuclease Inhibitor"/>
    <property type="match status" value="1"/>
</dbReference>
<dbReference type="InterPro" id="IPR036047">
    <property type="entry name" value="F-box-like_dom_sf"/>
</dbReference>
<dbReference type="InterPro" id="IPR053781">
    <property type="entry name" value="F-box_AtFBL13-like"/>
</dbReference>
<dbReference type="InterPro" id="IPR001810">
    <property type="entry name" value="F-box_dom"/>
</dbReference>
<dbReference type="InterPro" id="IPR006566">
    <property type="entry name" value="FBD"/>
</dbReference>
<dbReference type="InterPro" id="IPR055294">
    <property type="entry name" value="FBL60-like"/>
</dbReference>
<dbReference type="InterPro" id="IPR032675">
    <property type="entry name" value="LRR_dom_sf"/>
</dbReference>
<dbReference type="InterPro" id="IPR055411">
    <property type="entry name" value="LRR_FXL15/At3g58940/PEG3-like"/>
</dbReference>
<dbReference type="PANTHER" id="PTHR31293">
    <property type="entry name" value="RNI-LIKE SUPERFAMILY PROTEIN"/>
    <property type="match status" value="1"/>
</dbReference>
<dbReference type="PANTHER" id="PTHR31293:SF12">
    <property type="entry name" value="RNI-LIKE SUPERFAMILY PROTEIN"/>
    <property type="match status" value="1"/>
</dbReference>
<dbReference type="Pfam" id="PF00646">
    <property type="entry name" value="F-box"/>
    <property type="match status" value="1"/>
</dbReference>
<dbReference type="Pfam" id="PF24758">
    <property type="entry name" value="LRR_At5g56370"/>
    <property type="match status" value="1"/>
</dbReference>
<dbReference type="SMART" id="SM00579">
    <property type="entry name" value="FBD"/>
    <property type="match status" value="1"/>
</dbReference>
<dbReference type="SUPFAM" id="SSF81383">
    <property type="entry name" value="F-box domain"/>
    <property type="match status" value="1"/>
</dbReference>
<dbReference type="SUPFAM" id="SSF52047">
    <property type="entry name" value="RNI-like"/>
    <property type="match status" value="1"/>
</dbReference>
<dbReference type="PROSITE" id="PS50181">
    <property type="entry name" value="FBOX"/>
    <property type="match status" value="1"/>
</dbReference>
<gene>
    <name type="ordered locus">At3g58920</name>
    <name type="ORF">T20N10.270</name>
</gene>
<evidence type="ECO:0000255" key="1">
    <source>
        <dbReference type="PROSITE-ProRule" id="PRU00080"/>
    </source>
</evidence>
<feature type="chain" id="PRO_0000281959" description="Putative F-box/LRR-repeat protein At3g58920">
    <location>
        <begin position="1"/>
        <end position="470"/>
    </location>
</feature>
<feature type="domain" description="F-box" evidence="1">
    <location>
        <begin position="1"/>
        <end position="53"/>
    </location>
</feature>
<feature type="repeat" description="LRR 1">
    <location>
        <begin position="114"/>
        <end position="142"/>
    </location>
</feature>
<feature type="repeat" description="LRR 2">
    <location>
        <begin position="143"/>
        <end position="170"/>
    </location>
</feature>
<feature type="repeat" description="LRR 3">
    <location>
        <begin position="173"/>
        <end position="198"/>
    </location>
</feature>
<feature type="repeat" description="LRR 4">
    <location>
        <begin position="225"/>
        <end position="250"/>
    </location>
</feature>
<feature type="repeat" description="LRR 5">
    <location>
        <begin position="287"/>
        <end position="312"/>
    </location>
</feature>
<feature type="repeat" description="LRR 6">
    <location>
        <begin position="342"/>
        <end position="367"/>
    </location>
</feature>
<reference key="1">
    <citation type="journal article" date="2000" name="Nature">
        <title>Sequence and analysis of chromosome 3 of the plant Arabidopsis thaliana.</title>
        <authorList>
            <person name="Salanoubat M."/>
            <person name="Lemcke K."/>
            <person name="Rieger M."/>
            <person name="Ansorge W."/>
            <person name="Unseld M."/>
            <person name="Fartmann B."/>
            <person name="Valle G."/>
            <person name="Bloecker H."/>
            <person name="Perez-Alonso M."/>
            <person name="Obermaier B."/>
            <person name="Delseny M."/>
            <person name="Boutry M."/>
            <person name="Grivell L.A."/>
            <person name="Mache R."/>
            <person name="Puigdomenech P."/>
            <person name="De Simone V."/>
            <person name="Choisne N."/>
            <person name="Artiguenave F."/>
            <person name="Robert C."/>
            <person name="Brottier P."/>
            <person name="Wincker P."/>
            <person name="Cattolico L."/>
            <person name="Weissenbach J."/>
            <person name="Saurin W."/>
            <person name="Quetier F."/>
            <person name="Schaefer M."/>
            <person name="Mueller-Auer S."/>
            <person name="Gabel C."/>
            <person name="Fuchs M."/>
            <person name="Benes V."/>
            <person name="Wurmbach E."/>
            <person name="Drzonek H."/>
            <person name="Erfle H."/>
            <person name="Jordan N."/>
            <person name="Bangert S."/>
            <person name="Wiedelmann R."/>
            <person name="Kranz H."/>
            <person name="Voss H."/>
            <person name="Holland R."/>
            <person name="Brandt P."/>
            <person name="Nyakatura G."/>
            <person name="Vezzi A."/>
            <person name="D'Angelo M."/>
            <person name="Pallavicini A."/>
            <person name="Toppo S."/>
            <person name="Simionati B."/>
            <person name="Conrad A."/>
            <person name="Hornischer K."/>
            <person name="Kauer G."/>
            <person name="Loehnert T.-H."/>
            <person name="Nordsiek G."/>
            <person name="Reichelt J."/>
            <person name="Scharfe M."/>
            <person name="Schoen O."/>
            <person name="Bargues M."/>
            <person name="Terol J."/>
            <person name="Climent J."/>
            <person name="Navarro P."/>
            <person name="Collado C."/>
            <person name="Perez-Perez A."/>
            <person name="Ottenwaelder B."/>
            <person name="Duchemin D."/>
            <person name="Cooke R."/>
            <person name="Laudie M."/>
            <person name="Berger-Llauro C."/>
            <person name="Purnelle B."/>
            <person name="Masuy D."/>
            <person name="de Haan M."/>
            <person name="Maarse A.C."/>
            <person name="Alcaraz J.-P."/>
            <person name="Cottet A."/>
            <person name="Casacuberta E."/>
            <person name="Monfort A."/>
            <person name="Argiriou A."/>
            <person name="Flores M."/>
            <person name="Liguori R."/>
            <person name="Vitale D."/>
            <person name="Mannhaupt G."/>
            <person name="Haase D."/>
            <person name="Schoof H."/>
            <person name="Rudd S."/>
            <person name="Zaccaria P."/>
            <person name="Mewes H.-W."/>
            <person name="Mayer K.F.X."/>
            <person name="Kaul S."/>
            <person name="Town C.D."/>
            <person name="Koo H.L."/>
            <person name="Tallon L.J."/>
            <person name="Jenkins J."/>
            <person name="Rooney T."/>
            <person name="Rizzo M."/>
            <person name="Walts A."/>
            <person name="Utterback T."/>
            <person name="Fujii C.Y."/>
            <person name="Shea T.P."/>
            <person name="Creasy T.H."/>
            <person name="Haas B."/>
            <person name="Maiti R."/>
            <person name="Wu D."/>
            <person name="Peterson J."/>
            <person name="Van Aken S."/>
            <person name="Pai G."/>
            <person name="Militscher J."/>
            <person name="Sellers P."/>
            <person name="Gill J.E."/>
            <person name="Feldblyum T.V."/>
            <person name="Preuss D."/>
            <person name="Lin X."/>
            <person name="Nierman W.C."/>
            <person name="Salzberg S.L."/>
            <person name="White O."/>
            <person name="Venter J.C."/>
            <person name="Fraser C.M."/>
            <person name="Kaneko T."/>
            <person name="Nakamura Y."/>
            <person name="Sato S."/>
            <person name="Kato T."/>
            <person name="Asamizu E."/>
            <person name="Sasamoto S."/>
            <person name="Kimura T."/>
            <person name="Idesawa K."/>
            <person name="Kawashima K."/>
            <person name="Kishida Y."/>
            <person name="Kiyokawa C."/>
            <person name="Kohara M."/>
            <person name="Matsumoto M."/>
            <person name="Matsuno A."/>
            <person name="Muraki A."/>
            <person name="Nakayama S."/>
            <person name="Nakazaki N."/>
            <person name="Shinpo S."/>
            <person name="Takeuchi C."/>
            <person name="Wada T."/>
            <person name="Watanabe A."/>
            <person name="Yamada M."/>
            <person name="Yasuda M."/>
            <person name="Tabata S."/>
        </authorList>
    </citation>
    <scope>NUCLEOTIDE SEQUENCE [LARGE SCALE GENOMIC DNA]</scope>
    <source>
        <strain>cv. Columbia</strain>
    </source>
</reference>
<reference key="2">
    <citation type="journal article" date="2017" name="Plant J.">
        <title>Araport11: a complete reannotation of the Arabidopsis thaliana reference genome.</title>
        <authorList>
            <person name="Cheng C.Y."/>
            <person name="Krishnakumar V."/>
            <person name="Chan A.P."/>
            <person name="Thibaud-Nissen F."/>
            <person name="Schobel S."/>
            <person name="Town C.D."/>
        </authorList>
    </citation>
    <scope>GENOME REANNOTATION</scope>
    <source>
        <strain>cv. Columbia</strain>
    </source>
</reference>